<dbReference type="EC" id="2.3.1.191" evidence="2"/>
<dbReference type="EMBL" id="AE005174">
    <property type="protein sequence ID" value="AAG54481.1"/>
    <property type="molecule type" value="Genomic_DNA"/>
</dbReference>
<dbReference type="EMBL" id="BA000007">
    <property type="protein sequence ID" value="BAB33604.1"/>
    <property type="molecule type" value="Genomic_DNA"/>
</dbReference>
<dbReference type="PIR" id="E85502">
    <property type="entry name" value="E85502"/>
</dbReference>
<dbReference type="PIR" id="E90651">
    <property type="entry name" value="E90651"/>
</dbReference>
<dbReference type="RefSeq" id="NP_308208.1">
    <property type="nucleotide sequence ID" value="NC_002695.1"/>
</dbReference>
<dbReference type="RefSeq" id="WP_001139282.1">
    <property type="nucleotide sequence ID" value="NZ_VOAI01000002.1"/>
</dbReference>
<dbReference type="SMR" id="P65323"/>
<dbReference type="STRING" id="155864.Z0191"/>
<dbReference type="GeneID" id="913891"/>
<dbReference type="GeneID" id="93777246"/>
<dbReference type="KEGG" id="ece:Z0191"/>
<dbReference type="KEGG" id="ecs:ECs_0181"/>
<dbReference type="PATRIC" id="fig|386585.9.peg.284"/>
<dbReference type="eggNOG" id="COG1044">
    <property type="taxonomic scope" value="Bacteria"/>
</dbReference>
<dbReference type="HOGENOM" id="CLU_049865_0_1_6"/>
<dbReference type="OMA" id="PAMEIHE"/>
<dbReference type="UniPathway" id="UPA00359">
    <property type="reaction ID" value="UER00479"/>
</dbReference>
<dbReference type="Proteomes" id="UP000000558">
    <property type="component" value="Chromosome"/>
</dbReference>
<dbReference type="Proteomes" id="UP000002519">
    <property type="component" value="Chromosome"/>
</dbReference>
<dbReference type="GO" id="GO:0016020">
    <property type="term" value="C:membrane"/>
    <property type="evidence" value="ECO:0007669"/>
    <property type="project" value="GOC"/>
</dbReference>
<dbReference type="GO" id="GO:0016410">
    <property type="term" value="F:N-acyltransferase activity"/>
    <property type="evidence" value="ECO:0007669"/>
    <property type="project" value="InterPro"/>
</dbReference>
<dbReference type="GO" id="GO:0103118">
    <property type="term" value="F:UDP-3-O-(R-3-hydroxymyristoyl)-glucosamine N-acyltransferase activity"/>
    <property type="evidence" value="ECO:0007669"/>
    <property type="project" value="UniProtKB-EC"/>
</dbReference>
<dbReference type="GO" id="GO:0009245">
    <property type="term" value="P:lipid A biosynthetic process"/>
    <property type="evidence" value="ECO:0007669"/>
    <property type="project" value="UniProtKB-UniRule"/>
</dbReference>
<dbReference type="CDD" id="cd03352">
    <property type="entry name" value="LbH_LpxD"/>
    <property type="match status" value="1"/>
</dbReference>
<dbReference type="FunFam" id="1.20.5.170:FF:000032">
    <property type="entry name" value="UDP-3-O-(3-hydroxymyristoyl)glucosamine N-acyltransferase"/>
    <property type="match status" value="1"/>
</dbReference>
<dbReference type="FunFam" id="2.160.10.10:FF:000005">
    <property type="entry name" value="UDP-3-O-(3-hydroxymyristoyl)glucosamine N-acyltransferase"/>
    <property type="match status" value="1"/>
</dbReference>
<dbReference type="FunFam" id="3.40.1390.10:FF:000001">
    <property type="entry name" value="UDP-3-O-(3-hydroxymyristoyl)glucosamine N-acyltransferase"/>
    <property type="match status" value="1"/>
</dbReference>
<dbReference type="Gene3D" id="1.20.5.170">
    <property type="match status" value="1"/>
</dbReference>
<dbReference type="Gene3D" id="2.160.10.10">
    <property type="entry name" value="Hexapeptide repeat proteins"/>
    <property type="match status" value="1"/>
</dbReference>
<dbReference type="Gene3D" id="3.40.1390.10">
    <property type="entry name" value="MurE/MurF, N-terminal domain"/>
    <property type="match status" value="1"/>
</dbReference>
<dbReference type="HAMAP" id="MF_00523">
    <property type="entry name" value="LpxD"/>
    <property type="match status" value="1"/>
</dbReference>
<dbReference type="InterPro" id="IPR001451">
    <property type="entry name" value="Hexapep"/>
</dbReference>
<dbReference type="InterPro" id="IPR018357">
    <property type="entry name" value="Hexapep_transf_CS"/>
</dbReference>
<dbReference type="InterPro" id="IPR007691">
    <property type="entry name" value="LpxD"/>
</dbReference>
<dbReference type="InterPro" id="IPR011004">
    <property type="entry name" value="Trimer_LpxA-like_sf"/>
</dbReference>
<dbReference type="InterPro" id="IPR020573">
    <property type="entry name" value="UDP_GlcNAc_AcTrfase_non-rep"/>
</dbReference>
<dbReference type="NCBIfam" id="TIGR01853">
    <property type="entry name" value="lipid_A_lpxD"/>
    <property type="match status" value="1"/>
</dbReference>
<dbReference type="NCBIfam" id="NF002060">
    <property type="entry name" value="PRK00892.1"/>
    <property type="match status" value="1"/>
</dbReference>
<dbReference type="PANTHER" id="PTHR43378">
    <property type="entry name" value="UDP-3-O-ACYLGLUCOSAMINE N-ACYLTRANSFERASE"/>
    <property type="match status" value="1"/>
</dbReference>
<dbReference type="PANTHER" id="PTHR43378:SF2">
    <property type="entry name" value="UDP-3-O-ACYLGLUCOSAMINE N-ACYLTRANSFERASE 1, MITOCHONDRIAL-RELATED"/>
    <property type="match status" value="1"/>
</dbReference>
<dbReference type="Pfam" id="PF00132">
    <property type="entry name" value="Hexapep"/>
    <property type="match status" value="3"/>
</dbReference>
<dbReference type="Pfam" id="PF04613">
    <property type="entry name" value="LpxD"/>
    <property type="match status" value="1"/>
</dbReference>
<dbReference type="SUPFAM" id="SSF51161">
    <property type="entry name" value="Trimeric LpxA-like enzymes"/>
    <property type="match status" value="1"/>
</dbReference>
<dbReference type="PROSITE" id="PS00101">
    <property type="entry name" value="HEXAPEP_TRANSFERASES"/>
    <property type="match status" value="4"/>
</dbReference>
<comment type="function">
    <text evidence="2">Catalyzes the N-acylation of UDP-3-O-(hydroxytetradecanoyl)glucosamine using 3-hydroxytetradecanoyl-ACP as the acyl donor. Is involved in the biosynthesis of lipid A, a phosphorylated glycolipid that anchors the lipopolysaccharide to the outer membrane of the cell.</text>
</comment>
<comment type="catalytic activity">
    <reaction evidence="2">
        <text>a UDP-3-O-[(3R)-3-hydroxyacyl]-alpha-D-glucosamine + a (3R)-hydroxyacyl-[ACP] = a UDP-2-N,3-O-bis[(3R)-3-hydroxyacyl]-alpha-D-glucosamine + holo-[ACP] + H(+)</text>
        <dbReference type="Rhea" id="RHEA:53836"/>
        <dbReference type="Rhea" id="RHEA-COMP:9685"/>
        <dbReference type="Rhea" id="RHEA-COMP:9945"/>
        <dbReference type="ChEBI" id="CHEBI:15378"/>
        <dbReference type="ChEBI" id="CHEBI:64479"/>
        <dbReference type="ChEBI" id="CHEBI:78827"/>
        <dbReference type="ChEBI" id="CHEBI:137740"/>
        <dbReference type="ChEBI" id="CHEBI:137748"/>
        <dbReference type="EC" id="2.3.1.191"/>
    </reaction>
</comment>
<comment type="catalytic activity">
    <reaction evidence="2">
        <text>UDP-3-O-[(3R)-3-hydroxytetradecanoyl]-alpha-D-glucosamine + (3R)-hydroxytetradecanoyl-[ACP] = UDP-2-N,3-O-bis[(3R)-3-hydroxytetradecanoyl]-alpha-D-glucosamine + holo-[ACP] + H(+)</text>
        <dbReference type="Rhea" id="RHEA:17817"/>
        <dbReference type="Rhea" id="RHEA-COMP:9646"/>
        <dbReference type="Rhea" id="RHEA-COMP:9685"/>
        <dbReference type="ChEBI" id="CHEBI:15378"/>
        <dbReference type="ChEBI" id="CHEBI:64479"/>
        <dbReference type="ChEBI" id="CHEBI:71573"/>
        <dbReference type="ChEBI" id="CHEBI:78474"/>
        <dbReference type="ChEBI" id="CHEBI:78847"/>
    </reaction>
</comment>
<comment type="pathway">
    <text evidence="2">Glycolipid biosynthesis; lipid IV(A) biosynthesis; lipid IV(A) from (3R)-3-hydroxytetradecanoyl-[acyl-carrier-protein] and UDP-N-acetyl-alpha-D-glucosamine: step 3/6.</text>
</comment>
<comment type="subunit">
    <text evidence="2">Homotrimer.</text>
</comment>
<comment type="similarity">
    <text evidence="2">Belongs to the transferase hexapeptide repeat family. LpxD subfamily.</text>
</comment>
<gene>
    <name evidence="2" type="primary">lpxD</name>
    <name type="ordered locus">Z0191</name>
    <name type="ordered locus">ECs0181</name>
</gene>
<sequence length="341" mass="36024">MPSIRLADLAQQLDAELHGDGDIVITGVASMQSAQTGHITFMVNPKYREHLGLCQASAVVMTQDDLPFAKSAALVVKNPYLTYARMAQILDTTPQPAQNIAPSAVIDATAKLGNNVSIGANAVIESGVELGDNVIIGAGCFVGKNSKIGAGSRLWANVTIYHEIQIGQNCLIQSGTVVGADGFGYANDRGNWVKIPQIGRVIIGDRVEIGACTTIDRGALDDTVIGNGVIIDNQCQIAHNVVIGDNTAVAGGVIMAGSLKIGRYCMIGGASVINGHMEICDKVTVTGMGMVMRPITEPGVYSSGIPLQPNKVWRKTAALVMNIDDMSKRLKSLERKVNQQD</sequence>
<keyword id="KW-0012">Acyltransferase</keyword>
<keyword id="KW-0441">Lipid A biosynthesis</keyword>
<keyword id="KW-0444">Lipid biosynthesis</keyword>
<keyword id="KW-0443">Lipid metabolism</keyword>
<keyword id="KW-1185">Reference proteome</keyword>
<keyword id="KW-0677">Repeat</keyword>
<keyword id="KW-0808">Transferase</keyword>
<organism>
    <name type="scientific">Escherichia coli O157:H7</name>
    <dbReference type="NCBI Taxonomy" id="83334"/>
    <lineage>
        <taxon>Bacteria</taxon>
        <taxon>Pseudomonadati</taxon>
        <taxon>Pseudomonadota</taxon>
        <taxon>Gammaproteobacteria</taxon>
        <taxon>Enterobacterales</taxon>
        <taxon>Enterobacteriaceae</taxon>
        <taxon>Escherichia</taxon>
    </lineage>
</organism>
<name>LPXD_ECO57</name>
<evidence type="ECO:0000250" key="1"/>
<evidence type="ECO:0000255" key="2">
    <source>
        <dbReference type="HAMAP-Rule" id="MF_00523"/>
    </source>
</evidence>
<protein>
    <recommendedName>
        <fullName evidence="2">UDP-3-O-(3-hydroxymyristoyl)glucosamine N-acyltransferase</fullName>
        <shortName evidence="2">UDP-3-O-(3-OHC14)-GlcN N-acyltransferase</shortName>
        <ecNumber evidence="2">2.3.1.191</ecNumber>
    </recommendedName>
    <alternativeName>
        <fullName evidence="2">UDP-3-O-(3-hydroxytetradecanoyl)glucosamine N-acyltransferase</fullName>
    </alternativeName>
</protein>
<feature type="initiator methionine" description="Removed" evidence="1">
    <location>
        <position position="1"/>
    </location>
</feature>
<feature type="chain" id="PRO_0000059671" description="UDP-3-O-(3-hydroxymyristoyl)glucosamine N-acyltransferase">
    <location>
        <begin position="2"/>
        <end position="341"/>
    </location>
</feature>
<feature type="active site" description="Proton acceptor" evidence="2">
    <location>
        <position position="239"/>
    </location>
</feature>
<reference key="1">
    <citation type="journal article" date="2001" name="Nature">
        <title>Genome sequence of enterohaemorrhagic Escherichia coli O157:H7.</title>
        <authorList>
            <person name="Perna N.T."/>
            <person name="Plunkett G. III"/>
            <person name="Burland V."/>
            <person name="Mau B."/>
            <person name="Glasner J.D."/>
            <person name="Rose D.J."/>
            <person name="Mayhew G.F."/>
            <person name="Evans P.S."/>
            <person name="Gregor J."/>
            <person name="Kirkpatrick H.A."/>
            <person name="Posfai G."/>
            <person name="Hackett J."/>
            <person name="Klink S."/>
            <person name="Boutin A."/>
            <person name="Shao Y."/>
            <person name="Miller L."/>
            <person name="Grotbeck E.J."/>
            <person name="Davis N.W."/>
            <person name="Lim A."/>
            <person name="Dimalanta E.T."/>
            <person name="Potamousis K."/>
            <person name="Apodaca J."/>
            <person name="Anantharaman T.S."/>
            <person name="Lin J."/>
            <person name="Yen G."/>
            <person name="Schwartz D.C."/>
            <person name="Welch R.A."/>
            <person name="Blattner F.R."/>
        </authorList>
    </citation>
    <scope>NUCLEOTIDE SEQUENCE [LARGE SCALE GENOMIC DNA]</scope>
    <source>
        <strain>O157:H7 / EDL933 / ATCC 700927 / EHEC</strain>
    </source>
</reference>
<reference key="2">
    <citation type="journal article" date="2001" name="DNA Res.">
        <title>Complete genome sequence of enterohemorrhagic Escherichia coli O157:H7 and genomic comparison with a laboratory strain K-12.</title>
        <authorList>
            <person name="Hayashi T."/>
            <person name="Makino K."/>
            <person name="Ohnishi M."/>
            <person name="Kurokawa K."/>
            <person name="Ishii K."/>
            <person name="Yokoyama K."/>
            <person name="Han C.-G."/>
            <person name="Ohtsubo E."/>
            <person name="Nakayama K."/>
            <person name="Murata T."/>
            <person name="Tanaka M."/>
            <person name="Tobe T."/>
            <person name="Iida T."/>
            <person name="Takami H."/>
            <person name="Honda T."/>
            <person name="Sasakawa C."/>
            <person name="Ogasawara N."/>
            <person name="Yasunaga T."/>
            <person name="Kuhara S."/>
            <person name="Shiba T."/>
            <person name="Hattori M."/>
            <person name="Shinagawa H."/>
        </authorList>
    </citation>
    <scope>NUCLEOTIDE SEQUENCE [LARGE SCALE GENOMIC DNA]</scope>
    <source>
        <strain>O157:H7 / Sakai / RIMD 0509952 / EHEC</strain>
    </source>
</reference>
<accession>P65323</accession>
<accession>P58610</accession>
<proteinExistence type="inferred from homology"/>